<protein>
    <recommendedName>
        <fullName>Ribonuclease P protein subunit p40</fullName>
        <shortName>RNaseP protein p40</shortName>
    </recommendedName>
    <alternativeName>
        <fullName>RNase P subunit 1</fullName>
    </alternativeName>
</protein>
<keyword id="KW-0002">3D-structure</keyword>
<keyword id="KW-0025">Alternative splicing</keyword>
<keyword id="KW-0903">Direct protein sequencing</keyword>
<keyword id="KW-0539">Nucleus</keyword>
<keyword id="KW-1267">Proteomics identification</keyword>
<keyword id="KW-1185">Reference proteome</keyword>
<keyword id="KW-0694">RNA-binding</keyword>
<keyword id="KW-0698">rRNA processing</keyword>
<keyword id="KW-0819">tRNA processing</keyword>
<feature type="chain" id="PRO_0000097434" description="Ribonuclease P protein subunit p40">
    <location>
        <begin position="1"/>
        <end position="363"/>
    </location>
</feature>
<feature type="splice variant" id="VSP_037346" description="In isoform 2." evidence="5">
    <location>
        <begin position="90"/>
        <end position="112"/>
    </location>
</feature>
<feature type="sequence variant" id="VAR_055405" description="In dbSNP:rs12332997.">
    <original>V</original>
    <variation>I</variation>
    <location>
        <position position="314"/>
    </location>
</feature>
<feature type="sequence conflict" description="In Ref. 3; AAC24114." evidence="6" ref="3">
    <location>
        <position position="255"/>
    </location>
</feature>
<feature type="strand" evidence="10">
    <location>
        <begin position="13"/>
        <end position="21"/>
    </location>
</feature>
<feature type="helix" evidence="10">
    <location>
        <begin position="29"/>
        <end position="34"/>
    </location>
</feature>
<feature type="strand" evidence="10">
    <location>
        <begin position="39"/>
        <end position="48"/>
    </location>
</feature>
<feature type="helix" evidence="10">
    <location>
        <begin position="54"/>
        <end position="61"/>
    </location>
</feature>
<feature type="strand" evidence="10">
    <location>
        <begin position="66"/>
        <end position="73"/>
    </location>
</feature>
<feature type="helix" evidence="10">
    <location>
        <begin position="74"/>
        <end position="77"/>
    </location>
</feature>
<feature type="helix" evidence="10">
    <location>
        <begin position="80"/>
        <end position="85"/>
    </location>
</feature>
<feature type="turn" evidence="10">
    <location>
        <begin position="86"/>
        <end position="89"/>
    </location>
</feature>
<feature type="strand" evidence="10">
    <location>
        <begin position="90"/>
        <end position="98"/>
    </location>
</feature>
<feature type="turn" evidence="10">
    <location>
        <begin position="101"/>
        <end position="103"/>
    </location>
</feature>
<feature type="strand" evidence="10">
    <location>
        <begin position="106"/>
        <end position="109"/>
    </location>
</feature>
<feature type="strand" evidence="10">
    <location>
        <begin position="113"/>
        <end position="120"/>
    </location>
</feature>
<feature type="helix" evidence="10">
    <location>
        <begin position="121"/>
        <end position="127"/>
    </location>
</feature>
<feature type="strand" evidence="10">
    <location>
        <begin position="132"/>
        <end position="149"/>
    </location>
</feature>
<feature type="helix" evidence="10">
    <location>
        <begin position="150"/>
        <end position="155"/>
    </location>
</feature>
<feature type="turn" evidence="10">
    <location>
        <begin position="156"/>
        <end position="158"/>
    </location>
</feature>
<feature type="helix" evidence="10">
    <location>
        <begin position="160"/>
        <end position="170"/>
    </location>
</feature>
<feature type="strand" evidence="10">
    <location>
        <begin position="176"/>
        <end position="185"/>
    </location>
</feature>
<feature type="helix" evidence="10">
    <location>
        <begin position="193"/>
        <end position="196"/>
    </location>
</feature>
<feature type="turn" evidence="10">
    <location>
        <begin position="197"/>
        <end position="201"/>
    </location>
</feature>
<feature type="strand" evidence="10">
    <location>
        <begin position="203"/>
        <end position="205"/>
    </location>
</feature>
<feature type="strand" evidence="10">
    <location>
        <begin position="208"/>
        <end position="220"/>
    </location>
</feature>
<feature type="strand" evidence="10">
    <location>
        <begin position="226"/>
        <end position="228"/>
    </location>
</feature>
<feature type="turn" evidence="10">
    <location>
        <begin position="231"/>
        <end position="233"/>
    </location>
</feature>
<feature type="helix" evidence="10">
    <location>
        <begin position="237"/>
        <end position="253"/>
    </location>
</feature>
<feature type="strand" evidence="10">
    <location>
        <begin position="268"/>
        <end position="285"/>
    </location>
</feature>
<feature type="helix" evidence="10">
    <location>
        <begin position="287"/>
        <end position="298"/>
    </location>
</feature>
<feature type="helix" evidence="10">
    <location>
        <begin position="299"/>
        <end position="301"/>
    </location>
</feature>
<feature type="strand" evidence="10">
    <location>
        <begin position="308"/>
        <end position="316"/>
    </location>
</feature>
<feature type="strand" evidence="10">
    <location>
        <begin position="322"/>
        <end position="326"/>
    </location>
</feature>
<feature type="strand" evidence="10">
    <location>
        <begin position="330"/>
        <end position="335"/>
    </location>
</feature>
<feature type="strand" evidence="10">
    <location>
        <begin position="338"/>
        <end position="344"/>
    </location>
</feature>
<feature type="strand" evidence="10">
    <location>
        <begin position="347"/>
        <end position="355"/>
    </location>
</feature>
<accession>O75818</accession>
<accession>Q5VX97</accession>
<accession>Q8WVK8</accession>
<sequence>MATLRRLREAPRHLLVCEKSNFGNHKSRHRHLVQTHYYNYRVSFLIPECGILSEELKNLVMNTGPYYFVKNLPLHELITPEFISTFIKKGSCYALTYNTHIDEDNTVALLPNGKLILSLDKDTYEETGLQGHPSQFSGRKIMKFIVSIDLMELSLNLDSKKYERISWSFKEKKPLKFDFLLAWHKTGSEESTMMSYFSKYQIQEHQPKVALSTLRDLQCPVLQSSELEGTPEVSCRALELFDWLGAVFSNVDLNNEPNNFISTYCCPEPSTVVAKAYLCTITGFILPEKICLLLEHLCHYFDEPKLAPWVTLSVQGFADSPVSWEKNEHGFRKGGEHLYNFVIFNNQDYWLQMAVGANDHCPP</sequence>
<reference key="1">
    <citation type="journal article" date="2003" name="Nature">
        <title>The DNA sequence and analysis of human chromosome 6.</title>
        <authorList>
            <person name="Mungall A.J."/>
            <person name="Palmer S.A."/>
            <person name="Sims S.K."/>
            <person name="Edwards C.A."/>
            <person name="Ashurst J.L."/>
            <person name="Wilming L."/>
            <person name="Jones M.C."/>
            <person name="Horton R."/>
            <person name="Hunt S.E."/>
            <person name="Scott C.E."/>
            <person name="Gilbert J.G.R."/>
            <person name="Clamp M.E."/>
            <person name="Bethel G."/>
            <person name="Milne S."/>
            <person name="Ainscough R."/>
            <person name="Almeida J.P."/>
            <person name="Ambrose K.D."/>
            <person name="Andrews T.D."/>
            <person name="Ashwell R.I.S."/>
            <person name="Babbage A.K."/>
            <person name="Bagguley C.L."/>
            <person name="Bailey J."/>
            <person name="Banerjee R."/>
            <person name="Barker D.J."/>
            <person name="Barlow K.F."/>
            <person name="Bates K."/>
            <person name="Beare D.M."/>
            <person name="Beasley H."/>
            <person name="Beasley O."/>
            <person name="Bird C.P."/>
            <person name="Blakey S.E."/>
            <person name="Bray-Allen S."/>
            <person name="Brook J."/>
            <person name="Brown A.J."/>
            <person name="Brown J.Y."/>
            <person name="Burford D.C."/>
            <person name="Burrill W."/>
            <person name="Burton J."/>
            <person name="Carder C."/>
            <person name="Carter N.P."/>
            <person name="Chapman J.C."/>
            <person name="Clark S.Y."/>
            <person name="Clark G."/>
            <person name="Clee C.M."/>
            <person name="Clegg S."/>
            <person name="Cobley V."/>
            <person name="Collier R.E."/>
            <person name="Collins J.E."/>
            <person name="Colman L.K."/>
            <person name="Corby N.R."/>
            <person name="Coville G.J."/>
            <person name="Culley K.M."/>
            <person name="Dhami P."/>
            <person name="Davies J."/>
            <person name="Dunn M."/>
            <person name="Earthrowl M.E."/>
            <person name="Ellington A.E."/>
            <person name="Evans K.A."/>
            <person name="Faulkner L."/>
            <person name="Francis M.D."/>
            <person name="Frankish A."/>
            <person name="Frankland J."/>
            <person name="French L."/>
            <person name="Garner P."/>
            <person name="Garnett J."/>
            <person name="Ghori M.J."/>
            <person name="Gilby L.M."/>
            <person name="Gillson C.J."/>
            <person name="Glithero R.J."/>
            <person name="Grafham D.V."/>
            <person name="Grant M."/>
            <person name="Gribble S."/>
            <person name="Griffiths C."/>
            <person name="Griffiths M.N.D."/>
            <person name="Hall R."/>
            <person name="Halls K.S."/>
            <person name="Hammond S."/>
            <person name="Harley J.L."/>
            <person name="Hart E.A."/>
            <person name="Heath P.D."/>
            <person name="Heathcott R."/>
            <person name="Holmes S.J."/>
            <person name="Howden P.J."/>
            <person name="Howe K.L."/>
            <person name="Howell G.R."/>
            <person name="Huckle E."/>
            <person name="Humphray S.J."/>
            <person name="Humphries M.D."/>
            <person name="Hunt A.R."/>
            <person name="Johnson C.M."/>
            <person name="Joy A.A."/>
            <person name="Kay M."/>
            <person name="Keenan S.J."/>
            <person name="Kimberley A.M."/>
            <person name="King A."/>
            <person name="Laird G.K."/>
            <person name="Langford C."/>
            <person name="Lawlor S."/>
            <person name="Leongamornlert D.A."/>
            <person name="Leversha M."/>
            <person name="Lloyd C.R."/>
            <person name="Lloyd D.M."/>
            <person name="Loveland J.E."/>
            <person name="Lovell J."/>
            <person name="Martin S."/>
            <person name="Mashreghi-Mohammadi M."/>
            <person name="Maslen G.L."/>
            <person name="Matthews L."/>
            <person name="McCann O.T."/>
            <person name="McLaren S.J."/>
            <person name="McLay K."/>
            <person name="McMurray A."/>
            <person name="Moore M.J.F."/>
            <person name="Mullikin J.C."/>
            <person name="Niblett D."/>
            <person name="Nickerson T."/>
            <person name="Novik K.L."/>
            <person name="Oliver K."/>
            <person name="Overton-Larty E.K."/>
            <person name="Parker A."/>
            <person name="Patel R."/>
            <person name="Pearce A.V."/>
            <person name="Peck A.I."/>
            <person name="Phillimore B.J.C.T."/>
            <person name="Phillips S."/>
            <person name="Plumb R.W."/>
            <person name="Porter K.M."/>
            <person name="Ramsey Y."/>
            <person name="Ranby S.A."/>
            <person name="Rice C.M."/>
            <person name="Ross M.T."/>
            <person name="Searle S.M."/>
            <person name="Sehra H.K."/>
            <person name="Sheridan E."/>
            <person name="Skuce C.D."/>
            <person name="Smith S."/>
            <person name="Smith M."/>
            <person name="Spraggon L."/>
            <person name="Squares S.L."/>
            <person name="Steward C.A."/>
            <person name="Sycamore N."/>
            <person name="Tamlyn-Hall G."/>
            <person name="Tester J."/>
            <person name="Theaker A.J."/>
            <person name="Thomas D.W."/>
            <person name="Thorpe A."/>
            <person name="Tracey A."/>
            <person name="Tromans A."/>
            <person name="Tubby B."/>
            <person name="Wall M."/>
            <person name="Wallis J.M."/>
            <person name="West A.P."/>
            <person name="White S.S."/>
            <person name="Whitehead S.L."/>
            <person name="Whittaker H."/>
            <person name="Wild A."/>
            <person name="Willey D.J."/>
            <person name="Wilmer T.E."/>
            <person name="Wood J.M."/>
            <person name="Wray P.W."/>
            <person name="Wyatt J.C."/>
            <person name="Young L."/>
            <person name="Younger R.M."/>
            <person name="Bentley D.R."/>
            <person name="Coulson A."/>
            <person name="Durbin R.M."/>
            <person name="Hubbard T."/>
            <person name="Sulston J.E."/>
            <person name="Dunham I."/>
            <person name="Rogers J."/>
            <person name="Beck S."/>
        </authorList>
    </citation>
    <scope>NUCLEOTIDE SEQUENCE [LARGE SCALE GENOMIC DNA]</scope>
</reference>
<reference key="2">
    <citation type="journal article" date="2004" name="Genome Res.">
        <title>The status, quality, and expansion of the NIH full-length cDNA project: the Mammalian Gene Collection (MGC).</title>
        <authorList>
            <consortium name="The MGC Project Team"/>
        </authorList>
    </citation>
    <scope>NUCLEOTIDE SEQUENCE [LARGE SCALE MRNA] (ISOFORM 2)</scope>
    <source>
        <tissue>Brain</tissue>
    </source>
</reference>
<reference key="3">
    <citation type="journal article" date="1998" name="RNA">
        <title>Autoantigenic properties of some protein subunits of catalytically active complexes of human ribonuclease P.</title>
        <authorList>
            <person name="Jarrous N."/>
            <person name="Eder P.S."/>
            <person name="Guerrier-Takada C."/>
            <person name="Hoog C."/>
            <person name="Altman S."/>
        </authorList>
    </citation>
    <scope>NUCLEOTIDE SEQUENCE [GENOMIC DNA] OF 41-363</scope>
    <scope>PROTEIN SEQUENCE OF 73-87; 116-125 AND 202-208 (ISOFORM 1)</scope>
    <scope>FUNCTION</scope>
    <scope>SUBUNIT</scope>
</reference>
<reference key="4">
    <citation type="journal article" date="2006" name="RNA">
        <title>Differential association of protein subunits with the human RNase MRP and RNase P complexes.</title>
        <authorList>
            <person name="Welting T.J."/>
            <person name="Kikkert B.J."/>
            <person name="van Venrooij W.J."/>
            <person name="Pruijn G.J."/>
        </authorList>
    </citation>
    <scope>IDENTIFICATION IN RNASE P AND MRP COMPLEXES</scope>
    <scope>SUBUNIT</scope>
</reference>
<reference key="5">
    <citation type="journal article" date="2017" name="Genes Dev.">
        <title>Targeted CRISPR disruption reveals a role for RNase MRP RNA in human preribosomal RNA processing.</title>
        <authorList>
            <person name="Goldfarb K.C."/>
            <person name="Cech T.R."/>
        </authorList>
    </citation>
    <scope>FUNCTION</scope>
    <scope>SUBUNIT</scope>
</reference>
<reference evidence="7 8 9" key="6">
    <citation type="journal article" date="2018" name="Cell">
        <title>Cryo-EM Structure of the Human Ribonuclease P Holoenzyme.</title>
        <authorList>
            <person name="Wu J."/>
            <person name="Niu S."/>
            <person name="Tan M."/>
            <person name="Huang C."/>
            <person name="Li M."/>
            <person name="Song Y."/>
            <person name="Wang Q."/>
            <person name="Chen J."/>
            <person name="Shi S."/>
            <person name="Lan P."/>
            <person name="Lei M."/>
        </authorList>
    </citation>
    <scope>X-RAY CRYSTALLOGRAPHY (2.60 ANGSTROMS) OF RNASE P HOLOENZYME IN COMPLEX WITH TRNA</scope>
    <scope>FUNCTION</scope>
    <scope>SUBUNIT</scope>
</reference>
<comment type="function">
    <text evidence="2 3 4">Component of ribonuclease P, a ribonucleoprotein complex that generates mature tRNA molecules by cleaving their 5'-ends (PubMed:30454648, PubMed:9630247). Also a component of the MRP ribonuclease complex, which cleaves pre-rRNA sequences (PubMed:28115465).</text>
</comment>
<comment type="subunit">
    <text evidence="1 2 3 4">Component of nuclear RNase P and RNase MRP ribonucleoproteins (PubMed:16723659, PubMed:28115465, PubMed:30454648, PubMed:9630247). RNase P consists of a catalytic RNA moiety and about 10 protein subunits; POP1, POP4, POP5, POP7, RPP14, RPP21, RPP25, RPP30, RPP38 and RPP40 (PubMed:16723659, PubMed:30454648, PubMed:9630247). Within the RNase P complex, POP1, POP7 and RPP25 form the 'finger' subcomplex, POP5, RPP14, RPP40 and homodimeric RPP30 form the 'palm' subcomplex, and RPP21, POP4 and RPP38 form the 'wrist' subcomplex. All subunits of the RNase P complex interact with the catalytic RNA (PubMed:30454648). Several subunits of RNase P are also part of the RNase MRP complex. RNase MRP consists of a catalytic RNA moiety and about 8 protein subunits; POP1, POP7, RPP25, RPP30, RPP38, RPP40 and possibly also POP4 and POP5 (PubMed:16723659, PubMed:28115465).</text>
</comment>
<comment type="interaction">
    <interactant intactId="EBI-366505">
        <id>O75818</id>
    </interactant>
    <interactant intactId="EBI-366542">
        <id>O95059</id>
        <label>RPP14</label>
    </interactant>
    <organismsDiffer>false</organismsDiffer>
    <experiments>3</experiments>
</comment>
<comment type="interaction">
    <interactant intactId="EBI-366505">
        <id>O75818</id>
    </interactant>
    <interactant intactId="EBI-366586">
        <id>Q9H633</id>
        <label>RPP21</label>
    </interactant>
    <organismsDiffer>false</organismsDiffer>
    <experiments>4</experiments>
</comment>
<comment type="interaction">
    <interactant intactId="EBI-12401132">
        <id>O75818-2</id>
    </interactant>
    <interactant intactId="EBI-16439278">
        <id>Q6FHY5</id>
        <label>MEOX2</label>
    </interactant>
    <organismsDiffer>false</organismsDiffer>
    <experiments>3</experiments>
</comment>
<comment type="subcellular location">
    <subcellularLocation>
        <location evidence="6">Nucleus</location>
        <location evidence="6">Nucleolus</location>
    </subcellularLocation>
</comment>
<comment type="alternative products">
    <event type="alternative splicing"/>
    <isoform>
        <id>O75818-1</id>
        <name>1</name>
        <sequence type="displayed"/>
    </isoform>
    <isoform>
        <id>O75818-2</id>
        <name>2</name>
        <sequence type="described" ref="VSP_037346"/>
    </isoform>
</comment>
<comment type="sequence caution" evidence="6">
    <conflict type="erroneous initiation">
        <sequence resource="EMBL-CDS" id="AAC24114"/>
    </conflict>
</comment>
<comment type="sequence caution" evidence="6">
    <conflict type="frameshift">
        <sequence resource="EMBL-CDS" id="AAH17871"/>
    </conflict>
</comment>
<dbReference type="EMBL" id="AL359643">
    <property type="status" value="NOT_ANNOTATED_CDS"/>
    <property type="molecule type" value="Genomic_DNA"/>
</dbReference>
<dbReference type="EMBL" id="BC017871">
    <property type="protein sequence ID" value="AAH17871.1"/>
    <property type="status" value="ALT_SEQ"/>
    <property type="molecule type" value="mRNA"/>
</dbReference>
<dbReference type="EMBL" id="U94317">
    <property type="protein sequence ID" value="AAC24114.1"/>
    <property type="status" value="ALT_INIT"/>
    <property type="molecule type" value="Genomic_DNA"/>
</dbReference>
<dbReference type="CCDS" id="CCDS34333.1">
    <molecule id="O75818-1"/>
</dbReference>
<dbReference type="CCDS" id="CCDS69040.1">
    <molecule id="O75818-2"/>
</dbReference>
<dbReference type="RefSeq" id="NP_001273061.1">
    <molecule id="O75818-2"/>
    <property type="nucleotide sequence ID" value="NM_001286132.2"/>
</dbReference>
<dbReference type="RefSeq" id="NP_001273062.1">
    <property type="nucleotide sequence ID" value="NM_001286133.1"/>
</dbReference>
<dbReference type="RefSeq" id="NP_006629.2">
    <molecule id="O75818-1"/>
    <property type="nucleotide sequence ID" value="NM_006638.4"/>
</dbReference>
<dbReference type="PDB" id="6AHR">
    <property type="method" value="EM"/>
    <property type="resolution" value="3.92 A"/>
    <property type="chains" value="L=1-363"/>
</dbReference>
<dbReference type="PDB" id="6AHU">
    <property type="method" value="EM"/>
    <property type="resolution" value="3.66 A"/>
    <property type="chains" value="L=1-363"/>
</dbReference>
<dbReference type="PDB" id="6AHV">
    <property type="method" value="X-ray"/>
    <property type="resolution" value="2.60 A"/>
    <property type="chains" value="A=1-363"/>
</dbReference>
<dbReference type="PDBsum" id="6AHR"/>
<dbReference type="PDBsum" id="6AHU"/>
<dbReference type="PDBsum" id="6AHV"/>
<dbReference type="EMDB" id="EMD-9626"/>
<dbReference type="EMDB" id="EMD-9627"/>
<dbReference type="SMR" id="O75818"/>
<dbReference type="BioGRID" id="116013">
    <property type="interactions" value="62"/>
</dbReference>
<dbReference type="ComplexPortal" id="CPX-2876">
    <property type="entry name" value="Ribonuclease MRP complex"/>
</dbReference>
<dbReference type="ComplexPortal" id="CPX-2877">
    <property type="entry name" value="Nucleolar ribonuclease P complex"/>
</dbReference>
<dbReference type="CORUM" id="O75818"/>
<dbReference type="FunCoup" id="O75818">
    <property type="interactions" value="622"/>
</dbReference>
<dbReference type="IntAct" id="O75818">
    <property type="interactions" value="31"/>
</dbReference>
<dbReference type="STRING" id="9606.ENSP00000369391"/>
<dbReference type="iPTMnet" id="O75818"/>
<dbReference type="PhosphoSitePlus" id="O75818"/>
<dbReference type="BioMuta" id="RPP40"/>
<dbReference type="jPOST" id="O75818"/>
<dbReference type="MassIVE" id="O75818"/>
<dbReference type="PaxDb" id="9606-ENSP00000369391"/>
<dbReference type="PeptideAtlas" id="O75818"/>
<dbReference type="ProteomicsDB" id="50208">
    <molecule id="O75818-1"/>
</dbReference>
<dbReference type="ProteomicsDB" id="50209">
    <molecule id="O75818-2"/>
</dbReference>
<dbReference type="Pumba" id="O75818"/>
<dbReference type="Antibodypedia" id="24532">
    <property type="antibodies" value="81 antibodies from 21 providers"/>
</dbReference>
<dbReference type="DNASU" id="10799"/>
<dbReference type="Ensembl" id="ENST00000319533.9">
    <molecule id="O75818-2"/>
    <property type="protein sequence ID" value="ENSP00000317998.5"/>
    <property type="gene ID" value="ENSG00000124787.14"/>
</dbReference>
<dbReference type="Ensembl" id="ENST00000380051.7">
    <molecule id="O75818-1"/>
    <property type="protein sequence ID" value="ENSP00000369391.2"/>
    <property type="gene ID" value="ENSG00000124787.14"/>
</dbReference>
<dbReference type="GeneID" id="10799"/>
<dbReference type="KEGG" id="hsa:10799"/>
<dbReference type="MANE-Select" id="ENST00000380051.7">
    <property type="protein sequence ID" value="ENSP00000369391.2"/>
    <property type="RefSeq nucleotide sequence ID" value="NM_006638.4"/>
    <property type="RefSeq protein sequence ID" value="NP_006629.2"/>
</dbReference>
<dbReference type="UCSC" id="uc003mwl.5">
    <molecule id="O75818-1"/>
    <property type="organism name" value="human"/>
</dbReference>
<dbReference type="AGR" id="HGNC:20992"/>
<dbReference type="CTD" id="10799"/>
<dbReference type="DisGeNET" id="10799"/>
<dbReference type="GeneCards" id="RPP40"/>
<dbReference type="HGNC" id="HGNC:20992">
    <property type="gene designation" value="RPP40"/>
</dbReference>
<dbReference type="HPA" id="ENSG00000124787">
    <property type="expression patterns" value="Low tissue specificity"/>
</dbReference>
<dbReference type="MIM" id="606117">
    <property type="type" value="gene"/>
</dbReference>
<dbReference type="neXtProt" id="NX_O75818"/>
<dbReference type="OpenTargets" id="ENSG00000124787"/>
<dbReference type="PharmGKB" id="PA134911809"/>
<dbReference type="VEuPathDB" id="HostDB:ENSG00000124787"/>
<dbReference type="eggNOG" id="ENOG502QSAV">
    <property type="taxonomic scope" value="Eukaryota"/>
</dbReference>
<dbReference type="GeneTree" id="ENSGT00390000014167"/>
<dbReference type="InParanoid" id="O75818"/>
<dbReference type="OMA" id="HAYNCRV"/>
<dbReference type="OrthoDB" id="63112at2759"/>
<dbReference type="PAN-GO" id="O75818">
    <property type="GO annotations" value="7 GO annotations based on evolutionary models"/>
</dbReference>
<dbReference type="PhylomeDB" id="O75818"/>
<dbReference type="TreeFam" id="TF330967"/>
<dbReference type="BRENDA" id="3.1.26.5">
    <property type="organism ID" value="2681"/>
</dbReference>
<dbReference type="PathwayCommons" id="O75818"/>
<dbReference type="Reactome" id="R-HSA-6784531">
    <property type="pathway name" value="tRNA processing in the nucleus"/>
</dbReference>
<dbReference type="Reactome" id="R-HSA-6791226">
    <property type="pathway name" value="Major pathway of rRNA processing in the nucleolus and cytosol"/>
</dbReference>
<dbReference type="SignaLink" id="O75818"/>
<dbReference type="BioGRID-ORCS" id="10799">
    <property type="hits" value="638 hits in 1162 CRISPR screens"/>
</dbReference>
<dbReference type="CD-CODE" id="91857CE7">
    <property type="entry name" value="Nucleolus"/>
</dbReference>
<dbReference type="ChiTaRS" id="RPP40">
    <property type="organism name" value="human"/>
</dbReference>
<dbReference type="GeneWiki" id="RPP40"/>
<dbReference type="GenomeRNAi" id="10799"/>
<dbReference type="Pharos" id="O75818">
    <property type="development level" value="Tbio"/>
</dbReference>
<dbReference type="PRO" id="PR:O75818"/>
<dbReference type="Proteomes" id="UP000005640">
    <property type="component" value="Chromosome 6"/>
</dbReference>
<dbReference type="RNAct" id="O75818">
    <property type="molecule type" value="protein"/>
</dbReference>
<dbReference type="Bgee" id="ENSG00000124787">
    <property type="expression patterns" value="Expressed in male germ line stem cell (sensu Vertebrata) in testis and 163 other cell types or tissues"/>
</dbReference>
<dbReference type="ExpressionAtlas" id="O75818">
    <property type="expression patterns" value="baseline and differential"/>
</dbReference>
<dbReference type="GO" id="GO:0030681">
    <property type="term" value="C:multimeric ribonuclease P complex"/>
    <property type="evidence" value="ECO:0000314"/>
    <property type="project" value="UniProtKB"/>
</dbReference>
<dbReference type="GO" id="GO:0005655">
    <property type="term" value="C:nucleolar ribonuclease P complex"/>
    <property type="evidence" value="ECO:0000304"/>
    <property type="project" value="ProtInc"/>
</dbReference>
<dbReference type="GO" id="GO:0005654">
    <property type="term" value="C:nucleoplasm"/>
    <property type="evidence" value="ECO:0000304"/>
    <property type="project" value="Reactome"/>
</dbReference>
<dbReference type="GO" id="GO:0005634">
    <property type="term" value="C:nucleus"/>
    <property type="evidence" value="ECO:0000304"/>
    <property type="project" value="ProtInc"/>
</dbReference>
<dbReference type="GO" id="GO:0000172">
    <property type="term" value="C:ribonuclease MRP complex"/>
    <property type="evidence" value="ECO:0000318"/>
    <property type="project" value="GO_Central"/>
</dbReference>
<dbReference type="GO" id="GO:0004526">
    <property type="term" value="F:ribonuclease P activity"/>
    <property type="evidence" value="ECO:0000304"/>
    <property type="project" value="ProtInc"/>
</dbReference>
<dbReference type="GO" id="GO:0033204">
    <property type="term" value="F:ribonuclease P RNA binding"/>
    <property type="evidence" value="ECO:0000314"/>
    <property type="project" value="UniProtKB"/>
</dbReference>
<dbReference type="GO" id="GO:0000447">
    <property type="term" value="P:endonucleolytic cleavage in ITS1 to separate SSU-rRNA from 5.8S rRNA and LSU-rRNA from tricistronic rRNA transcript (SSU-rRNA, 5.8S rRNA, LSU-rRNA)"/>
    <property type="evidence" value="ECO:0000318"/>
    <property type="project" value="GO_Central"/>
</dbReference>
<dbReference type="GO" id="GO:0001682">
    <property type="term" value="P:tRNA 5'-leader removal"/>
    <property type="evidence" value="ECO:0000314"/>
    <property type="project" value="UniProtKB"/>
</dbReference>
<dbReference type="InterPro" id="IPR013893">
    <property type="entry name" value="RNase_P_Rpp40"/>
</dbReference>
<dbReference type="PANTHER" id="PTHR15396">
    <property type="entry name" value="RIBONUCLEASE P PROTEIN SUBUNIT P40"/>
    <property type="match status" value="1"/>
</dbReference>
<dbReference type="PANTHER" id="PTHR15396:SF1">
    <property type="entry name" value="RIBONUCLEASE P PROTEIN SUBUNIT P40"/>
    <property type="match status" value="1"/>
</dbReference>
<dbReference type="Pfam" id="PF08584">
    <property type="entry name" value="Ribonuc_P_40"/>
    <property type="match status" value="1"/>
</dbReference>
<name>RPP40_HUMAN</name>
<proteinExistence type="evidence at protein level"/>
<evidence type="ECO:0000269" key="1">
    <source>
    </source>
</evidence>
<evidence type="ECO:0000269" key="2">
    <source>
    </source>
</evidence>
<evidence type="ECO:0000269" key="3">
    <source>
    </source>
</evidence>
<evidence type="ECO:0000269" key="4">
    <source>
    </source>
</evidence>
<evidence type="ECO:0000303" key="5">
    <source>
    </source>
</evidence>
<evidence type="ECO:0000305" key="6"/>
<evidence type="ECO:0007744" key="7">
    <source>
        <dbReference type="PDB" id="6AHR"/>
    </source>
</evidence>
<evidence type="ECO:0007744" key="8">
    <source>
        <dbReference type="PDB" id="6AHU"/>
    </source>
</evidence>
<evidence type="ECO:0007744" key="9">
    <source>
        <dbReference type="PDB" id="6AHV"/>
    </source>
</evidence>
<evidence type="ECO:0007829" key="10">
    <source>
        <dbReference type="PDB" id="6AHV"/>
    </source>
</evidence>
<gene>
    <name type="primary">RPP40</name>
    <name type="synonym">RNASEP1</name>
</gene>
<organism>
    <name type="scientific">Homo sapiens</name>
    <name type="common">Human</name>
    <dbReference type="NCBI Taxonomy" id="9606"/>
    <lineage>
        <taxon>Eukaryota</taxon>
        <taxon>Metazoa</taxon>
        <taxon>Chordata</taxon>
        <taxon>Craniata</taxon>
        <taxon>Vertebrata</taxon>
        <taxon>Euteleostomi</taxon>
        <taxon>Mammalia</taxon>
        <taxon>Eutheria</taxon>
        <taxon>Euarchontoglires</taxon>
        <taxon>Primates</taxon>
        <taxon>Haplorrhini</taxon>
        <taxon>Catarrhini</taxon>
        <taxon>Hominidae</taxon>
        <taxon>Homo</taxon>
    </lineage>
</organism>